<dbReference type="EC" id="2.8.1.-" evidence="1"/>
<dbReference type="EMBL" id="AE014613">
    <property type="protein sequence ID" value="AAO69190.1"/>
    <property type="molecule type" value="Genomic_DNA"/>
</dbReference>
<dbReference type="EMBL" id="AL513382">
    <property type="protein sequence ID" value="CAD01676.1"/>
    <property type="molecule type" value="Genomic_DNA"/>
</dbReference>
<dbReference type="RefSeq" id="NP_455849.1">
    <property type="nucleotide sequence ID" value="NC_003198.1"/>
</dbReference>
<dbReference type="RefSeq" id="WP_001156215.1">
    <property type="nucleotide sequence ID" value="NZ_WSUR01000041.1"/>
</dbReference>
<dbReference type="SMR" id="Q8Z783"/>
<dbReference type="STRING" id="220341.gene:17585366"/>
<dbReference type="KEGG" id="stt:t1558"/>
<dbReference type="KEGG" id="sty:STY1412"/>
<dbReference type="PATRIC" id="fig|220341.7.peg.1422"/>
<dbReference type="eggNOG" id="COG0037">
    <property type="taxonomic scope" value="Bacteria"/>
</dbReference>
<dbReference type="HOGENOM" id="CLU_026481_0_0_6"/>
<dbReference type="OMA" id="IGHNLDD"/>
<dbReference type="OrthoDB" id="9801054at2"/>
<dbReference type="Proteomes" id="UP000000541">
    <property type="component" value="Chromosome"/>
</dbReference>
<dbReference type="Proteomes" id="UP000002670">
    <property type="component" value="Chromosome"/>
</dbReference>
<dbReference type="GO" id="GO:0005737">
    <property type="term" value="C:cytoplasm"/>
    <property type="evidence" value="ECO:0007669"/>
    <property type="project" value="UniProtKB-SubCell"/>
</dbReference>
<dbReference type="GO" id="GO:0051539">
    <property type="term" value="F:4 iron, 4 sulfur cluster binding"/>
    <property type="evidence" value="ECO:0007669"/>
    <property type="project" value="UniProtKB-UniRule"/>
</dbReference>
<dbReference type="GO" id="GO:0005524">
    <property type="term" value="F:ATP binding"/>
    <property type="evidence" value="ECO:0007669"/>
    <property type="project" value="UniProtKB-UniRule"/>
</dbReference>
<dbReference type="GO" id="GO:0000287">
    <property type="term" value="F:magnesium ion binding"/>
    <property type="evidence" value="ECO:0007669"/>
    <property type="project" value="UniProtKB-UniRule"/>
</dbReference>
<dbReference type="GO" id="GO:0016783">
    <property type="term" value="F:sulfurtransferase activity"/>
    <property type="evidence" value="ECO:0007669"/>
    <property type="project" value="UniProtKB-UniRule"/>
</dbReference>
<dbReference type="GO" id="GO:0000049">
    <property type="term" value="F:tRNA binding"/>
    <property type="evidence" value="ECO:0007669"/>
    <property type="project" value="UniProtKB-KW"/>
</dbReference>
<dbReference type="GO" id="GO:0034227">
    <property type="term" value="P:tRNA thio-modification"/>
    <property type="evidence" value="ECO:0007669"/>
    <property type="project" value="UniProtKB-UniRule"/>
</dbReference>
<dbReference type="CDD" id="cd24138">
    <property type="entry name" value="TtcA-like"/>
    <property type="match status" value="1"/>
</dbReference>
<dbReference type="FunFam" id="3.40.50.620:FF:000046">
    <property type="entry name" value="tRNA-cytidine(32) 2-sulfurtransferase"/>
    <property type="match status" value="1"/>
</dbReference>
<dbReference type="Gene3D" id="3.40.50.620">
    <property type="entry name" value="HUPs"/>
    <property type="match status" value="1"/>
</dbReference>
<dbReference type="HAMAP" id="MF_01850">
    <property type="entry name" value="TtcA"/>
    <property type="match status" value="1"/>
</dbReference>
<dbReference type="InterPro" id="IPR014729">
    <property type="entry name" value="Rossmann-like_a/b/a_fold"/>
</dbReference>
<dbReference type="InterPro" id="IPR011063">
    <property type="entry name" value="TilS/TtcA_N"/>
</dbReference>
<dbReference type="InterPro" id="IPR012089">
    <property type="entry name" value="tRNA_Cyd_32_2_STrfase"/>
</dbReference>
<dbReference type="InterPro" id="IPR035107">
    <property type="entry name" value="tRNA_thiolation_TtcA_Ctu1"/>
</dbReference>
<dbReference type="NCBIfam" id="NF007972">
    <property type="entry name" value="PRK10696.1"/>
    <property type="match status" value="1"/>
</dbReference>
<dbReference type="PANTHER" id="PTHR43686:SF1">
    <property type="entry name" value="AMINOTRAN_5 DOMAIN-CONTAINING PROTEIN"/>
    <property type="match status" value="1"/>
</dbReference>
<dbReference type="PANTHER" id="PTHR43686">
    <property type="entry name" value="SULFURTRANSFERASE-RELATED"/>
    <property type="match status" value="1"/>
</dbReference>
<dbReference type="Pfam" id="PF01171">
    <property type="entry name" value="ATP_bind_3"/>
    <property type="match status" value="1"/>
</dbReference>
<dbReference type="PIRSF" id="PIRSF004976">
    <property type="entry name" value="ATPase_YdaO"/>
    <property type="match status" value="1"/>
</dbReference>
<dbReference type="SUPFAM" id="SSF52402">
    <property type="entry name" value="Adenine nucleotide alpha hydrolases-like"/>
    <property type="match status" value="1"/>
</dbReference>
<proteinExistence type="inferred from homology"/>
<gene>
    <name evidence="1" type="primary">ttcA</name>
    <name type="ordered locus">STY1412</name>
    <name type="ordered locus">t1558</name>
</gene>
<reference key="1">
    <citation type="journal article" date="2001" name="Nature">
        <title>Complete genome sequence of a multiple drug resistant Salmonella enterica serovar Typhi CT18.</title>
        <authorList>
            <person name="Parkhill J."/>
            <person name="Dougan G."/>
            <person name="James K.D."/>
            <person name="Thomson N.R."/>
            <person name="Pickard D."/>
            <person name="Wain J."/>
            <person name="Churcher C.M."/>
            <person name="Mungall K.L."/>
            <person name="Bentley S.D."/>
            <person name="Holden M.T.G."/>
            <person name="Sebaihia M."/>
            <person name="Baker S."/>
            <person name="Basham D."/>
            <person name="Brooks K."/>
            <person name="Chillingworth T."/>
            <person name="Connerton P."/>
            <person name="Cronin A."/>
            <person name="Davis P."/>
            <person name="Davies R.M."/>
            <person name="Dowd L."/>
            <person name="White N."/>
            <person name="Farrar J."/>
            <person name="Feltwell T."/>
            <person name="Hamlin N."/>
            <person name="Haque A."/>
            <person name="Hien T.T."/>
            <person name="Holroyd S."/>
            <person name="Jagels K."/>
            <person name="Krogh A."/>
            <person name="Larsen T.S."/>
            <person name="Leather S."/>
            <person name="Moule S."/>
            <person name="O'Gaora P."/>
            <person name="Parry C."/>
            <person name="Quail M.A."/>
            <person name="Rutherford K.M."/>
            <person name="Simmonds M."/>
            <person name="Skelton J."/>
            <person name="Stevens K."/>
            <person name="Whitehead S."/>
            <person name="Barrell B.G."/>
        </authorList>
    </citation>
    <scope>NUCLEOTIDE SEQUENCE [LARGE SCALE GENOMIC DNA]</scope>
    <source>
        <strain>CT18</strain>
    </source>
</reference>
<reference key="2">
    <citation type="journal article" date="2003" name="J. Bacteriol.">
        <title>Comparative genomics of Salmonella enterica serovar Typhi strains Ty2 and CT18.</title>
        <authorList>
            <person name="Deng W."/>
            <person name="Liou S.-R."/>
            <person name="Plunkett G. III"/>
            <person name="Mayhew G.F."/>
            <person name="Rose D.J."/>
            <person name="Burland V."/>
            <person name="Kodoyianni V."/>
            <person name="Schwartz D.C."/>
            <person name="Blattner F.R."/>
        </authorList>
    </citation>
    <scope>NUCLEOTIDE SEQUENCE [LARGE SCALE GENOMIC DNA]</scope>
    <source>
        <strain>ATCC 700931 / Ty2</strain>
    </source>
</reference>
<comment type="function">
    <text evidence="1">Catalyzes the ATP-dependent 2-thiolation of cytidine in position 32 of tRNA, to form 2-thiocytidine (s(2)C32). The sulfur atoms are provided by the cysteine/cysteine desulfurase (IscS) system.</text>
</comment>
<comment type="catalytic activity">
    <reaction evidence="1">
        <text>cytidine(32) in tRNA + S-sulfanyl-L-cysteinyl-[cysteine desulfurase] + AH2 + ATP = 2-thiocytidine(32) in tRNA + L-cysteinyl-[cysteine desulfurase] + A + AMP + diphosphate + H(+)</text>
        <dbReference type="Rhea" id="RHEA:57048"/>
        <dbReference type="Rhea" id="RHEA-COMP:10288"/>
        <dbReference type="Rhea" id="RHEA-COMP:12157"/>
        <dbReference type="Rhea" id="RHEA-COMP:12158"/>
        <dbReference type="Rhea" id="RHEA-COMP:14821"/>
        <dbReference type="ChEBI" id="CHEBI:13193"/>
        <dbReference type="ChEBI" id="CHEBI:15378"/>
        <dbReference type="ChEBI" id="CHEBI:17499"/>
        <dbReference type="ChEBI" id="CHEBI:29950"/>
        <dbReference type="ChEBI" id="CHEBI:30616"/>
        <dbReference type="ChEBI" id="CHEBI:33019"/>
        <dbReference type="ChEBI" id="CHEBI:61963"/>
        <dbReference type="ChEBI" id="CHEBI:82748"/>
        <dbReference type="ChEBI" id="CHEBI:141453"/>
        <dbReference type="ChEBI" id="CHEBI:456215"/>
    </reaction>
    <physiologicalReaction direction="left-to-right" evidence="1">
        <dbReference type="Rhea" id="RHEA:57049"/>
    </physiologicalReaction>
</comment>
<comment type="cofactor">
    <cofactor evidence="1">
        <name>Mg(2+)</name>
        <dbReference type="ChEBI" id="CHEBI:18420"/>
    </cofactor>
</comment>
<comment type="cofactor">
    <cofactor evidence="1">
        <name>[4Fe-4S] cluster</name>
        <dbReference type="ChEBI" id="CHEBI:49883"/>
    </cofactor>
    <text evidence="1">Binds 1 [4Fe-4S] cluster per subunit. The cluster is chelated by three Cys residues, the fourth Fe has a free coordination site that may bind a sulfur atom transferred from the persulfide of IscS.</text>
</comment>
<comment type="pathway">
    <text evidence="1">tRNA modification.</text>
</comment>
<comment type="subunit">
    <text evidence="1">Homodimer.</text>
</comment>
<comment type="subcellular location">
    <subcellularLocation>
        <location evidence="1">Cytoplasm</location>
    </subcellularLocation>
</comment>
<comment type="miscellaneous">
    <text evidence="1">The thiolation reaction likely consists of two steps: a first activation step by ATP to form an adenylated intermediate of the target base of tRNA, and a second nucleophilic substitution step of the sulfur (S) atom supplied by the hydrosulfide attached to the Fe-S cluster.</text>
</comment>
<comment type="similarity">
    <text evidence="1">Belongs to the TtcA family.</text>
</comment>
<accession>Q8Z783</accession>
<accession>Q7C9L5</accession>
<evidence type="ECO:0000255" key="1">
    <source>
        <dbReference type="HAMAP-Rule" id="MF_01850"/>
    </source>
</evidence>
<protein>
    <recommendedName>
        <fullName evidence="1">tRNA-cytidine(32) 2-sulfurtransferase</fullName>
        <ecNumber evidence="1">2.8.1.-</ecNumber>
    </recommendedName>
    <alternativeName>
        <fullName evidence="1">Two-thiocytidine biosynthesis protein A</fullName>
    </alternativeName>
    <alternativeName>
        <fullName evidence="1">tRNA 2-thiocytidine biosynthesis protein TtcA</fullName>
    </alternativeName>
</protein>
<keyword id="KW-0004">4Fe-4S</keyword>
<keyword id="KW-0067">ATP-binding</keyword>
<keyword id="KW-0963">Cytoplasm</keyword>
<keyword id="KW-0408">Iron</keyword>
<keyword id="KW-0411">Iron-sulfur</keyword>
<keyword id="KW-0460">Magnesium</keyword>
<keyword id="KW-0479">Metal-binding</keyword>
<keyword id="KW-0547">Nucleotide-binding</keyword>
<keyword id="KW-0694">RNA-binding</keyword>
<keyword id="KW-0808">Transferase</keyword>
<keyword id="KW-0819">tRNA processing</keyword>
<keyword id="KW-0820">tRNA-binding</keyword>
<organism>
    <name type="scientific">Salmonella typhi</name>
    <dbReference type="NCBI Taxonomy" id="90370"/>
    <lineage>
        <taxon>Bacteria</taxon>
        <taxon>Pseudomonadati</taxon>
        <taxon>Pseudomonadota</taxon>
        <taxon>Gammaproteobacteria</taxon>
        <taxon>Enterobacterales</taxon>
        <taxon>Enterobacteriaceae</taxon>
        <taxon>Salmonella</taxon>
    </lineage>
</organism>
<name>TTCA_SALTI</name>
<feature type="chain" id="PRO_0000348828" description="tRNA-cytidine(32) 2-sulfurtransferase">
    <location>
        <begin position="1"/>
        <end position="311"/>
    </location>
</feature>
<feature type="short sequence motif" description="PP-loop motif" evidence="1">
    <location>
        <begin position="47"/>
        <end position="52"/>
    </location>
</feature>
<feature type="binding site" evidence="1">
    <location>
        <position position="122"/>
    </location>
    <ligand>
        <name>[4Fe-4S] cluster</name>
        <dbReference type="ChEBI" id="CHEBI:49883"/>
    </ligand>
</feature>
<feature type="binding site" evidence="1">
    <location>
        <position position="125"/>
    </location>
    <ligand>
        <name>[4Fe-4S] cluster</name>
        <dbReference type="ChEBI" id="CHEBI:49883"/>
    </ligand>
</feature>
<feature type="binding site" evidence="1">
    <location>
        <position position="213"/>
    </location>
    <ligand>
        <name>[4Fe-4S] cluster</name>
        <dbReference type="ChEBI" id="CHEBI:49883"/>
    </ligand>
</feature>
<sequence>MQEIQKNTKKEQYNLNKLQKRLRRNVGEAIADFNMIEEGDRIMVCLSGGKDSYTMLEILRNLQQSAPINFSLVAVNLDQKQPGFPEHILPAYLEQLGVEYKIVEENTYGIVKEKIPEGKTTCSLCSRLRRGILYRTATELGATKIALGHHRDDILQTLFLNMFYGGKMKGMPPKLMSDDGKHIVIRPLAYCREKDIVRFAEAKAFPIIPCNLCGSQPNLQRQVIADMLRDWDKRYPGRIETMFSAMQNVVPSHLCDTNLFDFKGITHGSEVIDGGDLAFDREEIPLQPAGWQPEEDDTALEALRLDVIEVK</sequence>